<accession>B0BAD4</accession>
<evidence type="ECO:0000255" key="1">
    <source>
        <dbReference type="HAMAP-Rule" id="MF_00050"/>
    </source>
</evidence>
<gene>
    <name evidence="1" type="primary">tsf</name>
    <name type="ordered locus">CTLon_0048</name>
</gene>
<organism>
    <name type="scientific">Chlamydia trachomatis serovar L2b (strain UCH-1/proctitis)</name>
    <dbReference type="NCBI Taxonomy" id="471473"/>
    <lineage>
        <taxon>Bacteria</taxon>
        <taxon>Pseudomonadati</taxon>
        <taxon>Chlamydiota</taxon>
        <taxon>Chlamydiia</taxon>
        <taxon>Chlamydiales</taxon>
        <taxon>Chlamydiaceae</taxon>
        <taxon>Chlamydia/Chlamydophila group</taxon>
        <taxon>Chlamydia</taxon>
    </lineage>
</organism>
<keyword id="KW-0963">Cytoplasm</keyword>
<keyword id="KW-0251">Elongation factor</keyword>
<keyword id="KW-0648">Protein biosynthesis</keyword>
<proteinExistence type="inferred from homology"/>
<comment type="function">
    <text evidence="1">Associates with the EF-Tu.GDP complex and induces the exchange of GDP to GTP. It remains bound to the aminoacyl-tRNA.EF-Tu.GTP complex up to the GTP hydrolysis stage on the ribosome.</text>
</comment>
<comment type="subcellular location">
    <subcellularLocation>
        <location evidence="1">Cytoplasm</location>
    </subcellularLocation>
</comment>
<comment type="similarity">
    <text evidence="1">Belongs to the EF-Ts family.</text>
</comment>
<dbReference type="EMBL" id="AM884177">
    <property type="protein sequence ID" value="CAP06446.1"/>
    <property type="molecule type" value="Genomic_DNA"/>
</dbReference>
<dbReference type="RefSeq" id="WP_012263535.1">
    <property type="nucleotide sequence ID" value="NC_010280.2"/>
</dbReference>
<dbReference type="SMR" id="B0BAD4"/>
<dbReference type="KEGG" id="ctl:CTLon_0048"/>
<dbReference type="HOGENOM" id="CLU_047155_0_0_0"/>
<dbReference type="Proteomes" id="UP001154401">
    <property type="component" value="Chromosome"/>
</dbReference>
<dbReference type="GO" id="GO:0005737">
    <property type="term" value="C:cytoplasm"/>
    <property type="evidence" value="ECO:0007669"/>
    <property type="project" value="UniProtKB-SubCell"/>
</dbReference>
<dbReference type="GO" id="GO:0003746">
    <property type="term" value="F:translation elongation factor activity"/>
    <property type="evidence" value="ECO:0007669"/>
    <property type="project" value="UniProtKB-UniRule"/>
</dbReference>
<dbReference type="CDD" id="cd14275">
    <property type="entry name" value="UBA_EF-Ts"/>
    <property type="match status" value="1"/>
</dbReference>
<dbReference type="FunFam" id="1.10.286.20:FF:000001">
    <property type="entry name" value="Elongation factor Ts"/>
    <property type="match status" value="1"/>
</dbReference>
<dbReference type="FunFam" id="1.10.8.10:FF:000130">
    <property type="entry name" value="Elongation factor Ts"/>
    <property type="match status" value="1"/>
</dbReference>
<dbReference type="Gene3D" id="1.10.286.20">
    <property type="match status" value="1"/>
</dbReference>
<dbReference type="Gene3D" id="1.10.8.10">
    <property type="entry name" value="DNA helicase RuvA subunit, C-terminal domain"/>
    <property type="match status" value="1"/>
</dbReference>
<dbReference type="Gene3D" id="3.30.479.20">
    <property type="entry name" value="Elongation factor Ts, dimerisation domain"/>
    <property type="match status" value="2"/>
</dbReference>
<dbReference type="HAMAP" id="MF_00050">
    <property type="entry name" value="EF_Ts"/>
    <property type="match status" value="1"/>
</dbReference>
<dbReference type="InterPro" id="IPR036402">
    <property type="entry name" value="EF-Ts_dimer_sf"/>
</dbReference>
<dbReference type="InterPro" id="IPR001816">
    <property type="entry name" value="Transl_elong_EFTs/EF1B"/>
</dbReference>
<dbReference type="InterPro" id="IPR014039">
    <property type="entry name" value="Transl_elong_EFTs/EF1B_dimer"/>
</dbReference>
<dbReference type="InterPro" id="IPR018101">
    <property type="entry name" value="Transl_elong_Ts_CS"/>
</dbReference>
<dbReference type="InterPro" id="IPR009060">
    <property type="entry name" value="UBA-like_sf"/>
</dbReference>
<dbReference type="NCBIfam" id="TIGR00116">
    <property type="entry name" value="tsf"/>
    <property type="match status" value="1"/>
</dbReference>
<dbReference type="PANTHER" id="PTHR11741">
    <property type="entry name" value="ELONGATION FACTOR TS"/>
    <property type="match status" value="1"/>
</dbReference>
<dbReference type="PANTHER" id="PTHR11741:SF0">
    <property type="entry name" value="ELONGATION FACTOR TS, MITOCHONDRIAL"/>
    <property type="match status" value="1"/>
</dbReference>
<dbReference type="Pfam" id="PF00889">
    <property type="entry name" value="EF_TS"/>
    <property type="match status" value="1"/>
</dbReference>
<dbReference type="SUPFAM" id="SSF54713">
    <property type="entry name" value="Elongation factor Ts (EF-Ts), dimerisation domain"/>
    <property type="match status" value="1"/>
</dbReference>
<dbReference type="SUPFAM" id="SSF46934">
    <property type="entry name" value="UBA-like"/>
    <property type="match status" value="1"/>
</dbReference>
<dbReference type="PROSITE" id="PS01126">
    <property type="entry name" value="EF_TS_1"/>
    <property type="match status" value="1"/>
</dbReference>
<dbReference type="PROSITE" id="PS01127">
    <property type="entry name" value="EF_TS_2"/>
    <property type="match status" value="1"/>
</dbReference>
<sequence>MSDFSMETLKNLRQQTGVGLTKCKEALEHAKGNLEDAVVYLRKLGLASAGKKEHRETKEGVIAALVDERGAALVEVNVETDFVANNSVFRAFVTSLLSDLLDHKLSDVEALARVMSSQEPSLSVEELKAVTMQTVGENIRISRAFYTPVNSGQSVGIYSHGNGKAVAIVFLSGSENQEALAKDIAMHIVASQPQFLSKESVPQEILEREREVFSSQVAGKPQEVVEKITQGKFKAFFQEACLLEQAFIKDPEVTIQGLIDRAAKASGEPLRVEHFVFWKMGA</sequence>
<feature type="chain" id="PRO_1000116713" description="Elongation factor Ts">
    <location>
        <begin position="1"/>
        <end position="282"/>
    </location>
</feature>
<feature type="region of interest" description="Involved in Mg(2+) ion dislocation from EF-Tu" evidence="1">
    <location>
        <begin position="80"/>
        <end position="83"/>
    </location>
</feature>
<reference key="1">
    <citation type="journal article" date="2008" name="Genome Res.">
        <title>Chlamydia trachomatis: genome sequence analysis of lymphogranuloma venereum isolates.</title>
        <authorList>
            <person name="Thomson N.R."/>
            <person name="Holden M.T.G."/>
            <person name="Carder C."/>
            <person name="Lennard N."/>
            <person name="Lockey S.J."/>
            <person name="Marsh P."/>
            <person name="Skipp P."/>
            <person name="O'Connor C.D."/>
            <person name="Goodhead I."/>
            <person name="Norbertzcak H."/>
            <person name="Harris B."/>
            <person name="Ormond D."/>
            <person name="Rance R."/>
            <person name="Quail M.A."/>
            <person name="Parkhill J."/>
            <person name="Stephens R.S."/>
            <person name="Clarke I.N."/>
        </authorList>
    </citation>
    <scope>NUCLEOTIDE SEQUENCE [LARGE SCALE GENOMIC DNA]</scope>
    <source>
        <strain>UCH-1/proctitis</strain>
    </source>
</reference>
<protein>
    <recommendedName>
        <fullName evidence="1">Elongation factor Ts</fullName>
        <shortName evidence="1">EF-Ts</shortName>
    </recommendedName>
</protein>
<name>EFTS_CHLTB</name>